<organism>
    <name type="scientific">Natronomonas pharaonis (strain ATCC 35678 / DSM 2160 / CIP 103997 / JCM 8858 / NBRC 14720 / NCIMB 2260 / Gabara)</name>
    <name type="common">Halobacterium pharaonis</name>
    <dbReference type="NCBI Taxonomy" id="348780"/>
    <lineage>
        <taxon>Archaea</taxon>
        <taxon>Methanobacteriati</taxon>
        <taxon>Methanobacteriota</taxon>
        <taxon>Stenosarchaea group</taxon>
        <taxon>Halobacteria</taxon>
        <taxon>Halobacteriales</taxon>
        <taxon>Haloarculaceae</taxon>
        <taxon>Natronomonas</taxon>
    </lineage>
</organism>
<protein>
    <recommendedName>
        <fullName evidence="3">Large ribosomal subunit protein eL42</fullName>
    </recommendedName>
    <alternativeName>
        <fullName>50S ribosomal protein L44e</fullName>
    </alternativeName>
</protein>
<feature type="chain" id="PRO_0000419127" description="Large ribosomal subunit protein eL42">
    <location>
        <begin position="1"/>
        <end position="93"/>
    </location>
</feature>
<feature type="zinc finger region" description="C4-type" evidence="2">
    <location>
        <begin position="11"/>
        <end position="75"/>
    </location>
</feature>
<feature type="binding site" evidence="2">
    <location>
        <position position="11"/>
    </location>
    <ligand>
        <name>Zn(2+)</name>
        <dbReference type="ChEBI" id="CHEBI:29105"/>
    </ligand>
</feature>
<feature type="binding site" evidence="2">
    <location>
        <position position="14"/>
    </location>
    <ligand>
        <name>Zn(2+)</name>
        <dbReference type="ChEBI" id="CHEBI:29105"/>
    </ligand>
</feature>
<feature type="binding site" evidence="2">
    <location>
        <position position="72"/>
    </location>
    <ligand>
        <name>Zn(2+)</name>
        <dbReference type="ChEBI" id="CHEBI:29105"/>
    </ligand>
</feature>
<feature type="binding site" evidence="2">
    <location>
        <position position="75"/>
    </location>
    <ligand>
        <name>Zn(2+)</name>
        <dbReference type="ChEBI" id="CHEBI:29105"/>
    </ligand>
</feature>
<evidence type="ECO:0000250" key="1"/>
<evidence type="ECO:0000255" key="2"/>
<evidence type="ECO:0000305" key="3"/>
<reference key="1">
    <citation type="journal article" date="2005" name="Genome Res.">
        <title>Living with two extremes: conclusions from the genome sequence of Natronomonas pharaonis.</title>
        <authorList>
            <person name="Falb M."/>
            <person name="Pfeiffer F."/>
            <person name="Palm P."/>
            <person name="Rodewald K."/>
            <person name="Hickmann V."/>
            <person name="Tittor J."/>
            <person name="Oesterhelt D."/>
        </authorList>
    </citation>
    <scope>NUCLEOTIDE SEQUENCE [LARGE SCALE GENOMIC DNA]</scope>
    <source>
        <strain>ATCC 35678 / DSM 2160 / CIP 103997 / JCM 8858 / NBRC 14720 / NCIMB 2260 / Gabara</strain>
    </source>
</reference>
<sequence>MEMPRRFNTYCPHCHSHFEHEVEKVRSGRSSGTKWDARRTRRGKAVIGNAGRFSKVPGGDKPTKKTDLKYRCSECGKAHLREGWRAGRLTFQE</sequence>
<accession>Q3ISI8</accession>
<comment type="function">
    <text evidence="1">Binds to the 23S rRNA.</text>
</comment>
<comment type="cofactor">
    <cofactor evidence="3">
        <name>Zn(2+)</name>
        <dbReference type="ChEBI" id="CHEBI:29105"/>
    </cofactor>
    <text evidence="3">Binds 1 zinc ion per subunit.</text>
</comment>
<comment type="subunit">
    <text evidence="1">Part of the 50S ribosomal subunit.</text>
</comment>
<comment type="similarity">
    <text evidence="3">Belongs to the eukaryotic ribosomal protein eL42 family.</text>
</comment>
<gene>
    <name type="primary">rpl44e</name>
    <name type="synonym">rpl36aR</name>
    <name type="ordered locus">NP_1614A</name>
</gene>
<name>RL44E_NATPD</name>
<keyword id="KW-0479">Metal-binding</keyword>
<keyword id="KW-1185">Reference proteome</keyword>
<keyword id="KW-0687">Ribonucleoprotein</keyword>
<keyword id="KW-0689">Ribosomal protein</keyword>
<keyword id="KW-0694">RNA-binding</keyword>
<keyword id="KW-0699">rRNA-binding</keyword>
<keyword id="KW-0862">Zinc</keyword>
<keyword id="KW-0863">Zinc-finger</keyword>
<proteinExistence type="inferred from homology"/>
<dbReference type="EMBL" id="CR936257">
    <property type="protein sequence ID" value="CAI48898.1"/>
    <property type="molecule type" value="Genomic_DNA"/>
</dbReference>
<dbReference type="RefSeq" id="WP_011322532.1">
    <property type="nucleotide sequence ID" value="NC_007426.1"/>
</dbReference>
<dbReference type="SMR" id="Q3ISI8"/>
<dbReference type="STRING" id="348780.NP_1614A"/>
<dbReference type="EnsemblBacteria" id="CAI48898">
    <property type="protein sequence ID" value="CAI48898"/>
    <property type="gene ID" value="NP_1614A"/>
</dbReference>
<dbReference type="GeneID" id="3703141"/>
<dbReference type="KEGG" id="nph:NP_1614A"/>
<dbReference type="eggNOG" id="arCOG04109">
    <property type="taxonomic scope" value="Archaea"/>
</dbReference>
<dbReference type="HOGENOM" id="CLU_114645_3_0_2"/>
<dbReference type="OrthoDB" id="52456at2157"/>
<dbReference type="Proteomes" id="UP000002698">
    <property type="component" value="Chromosome"/>
</dbReference>
<dbReference type="GO" id="GO:1990904">
    <property type="term" value="C:ribonucleoprotein complex"/>
    <property type="evidence" value="ECO:0007669"/>
    <property type="project" value="UniProtKB-KW"/>
</dbReference>
<dbReference type="GO" id="GO:0005840">
    <property type="term" value="C:ribosome"/>
    <property type="evidence" value="ECO:0007669"/>
    <property type="project" value="UniProtKB-KW"/>
</dbReference>
<dbReference type="GO" id="GO:0070180">
    <property type="term" value="F:large ribosomal subunit rRNA binding"/>
    <property type="evidence" value="ECO:0007669"/>
    <property type="project" value="UniProtKB-UniRule"/>
</dbReference>
<dbReference type="GO" id="GO:0003735">
    <property type="term" value="F:structural constituent of ribosome"/>
    <property type="evidence" value="ECO:0007669"/>
    <property type="project" value="InterPro"/>
</dbReference>
<dbReference type="GO" id="GO:0008270">
    <property type="term" value="F:zinc ion binding"/>
    <property type="evidence" value="ECO:0007669"/>
    <property type="project" value="UniProtKB-UniRule"/>
</dbReference>
<dbReference type="GO" id="GO:0006412">
    <property type="term" value="P:translation"/>
    <property type="evidence" value="ECO:0007669"/>
    <property type="project" value="UniProtKB-UniRule"/>
</dbReference>
<dbReference type="Gene3D" id="3.10.450.80">
    <property type="match status" value="1"/>
</dbReference>
<dbReference type="HAMAP" id="MF_01476">
    <property type="entry name" value="Ribosomal_L44e"/>
    <property type="match status" value="1"/>
</dbReference>
<dbReference type="InterPro" id="IPR000552">
    <property type="entry name" value="Ribosomal_eL44"/>
</dbReference>
<dbReference type="InterPro" id="IPR053708">
    <property type="entry name" value="Ribosomal_LSU_eL42"/>
</dbReference>
<dbReference type="InterPro" id="IPR011332">
    <property type="entry name" value="Ribosomal_zn-bd"/>
</dbReference>
<dbReference type="NCBIfam" id="NF004425">
    <property type="entry name" value="PRK05767.1"/>
    <property type="match status" value="1"/>
</dbReference>
<dbReference type="Pfam" id="PF00935">
    <property type="entry name" value="Ribosomal_L44"/>
    <property type="match status" value="1"/>
</dbReference>
<dbReference type="SUPFAM" id="SSF57829">
    <property type="entry name" value="Zn-binding ribosomal proteins"/>
    <property type="match status" value="1"/>
</dbReference>
<dbReference type="PROSITE" id="PS01172">
    <property type="entry name" value="RIBOSOMAL_L44E"/>
    <property type="match status" value="1"/>
</dbReference>